<protein>
    <recommendedName>
        <fullName evidence="6">bZIP transcription factor 44</fullName>
        <shortName evidence="5">AtbZIP44</shortName>
    </recommendedName>
</protein>
<comment type="function">
    <text evidence="4">Transcription factor that binds to the DNA G-box motif 5'-CACGTG-3' of MAN7 promoter. Involved in the positive regulation of seed germination through MAN7 gene activation. MAN7 is required for both, loosening of the micropylar endosperm, and rupture of the seed coat in germinating seeds.</text>
</comment>
<comment type="subunit">
    <text evidence="3">Forms heterodimers with BZIP1, BZIP9, BZIP10, BZIP25 and BZIP63.</text>
</comment>
<comment type="interaction">
    <interactant intactId="EBI-942804">
        <id>C0Z2L5</id>
    </interactant>
    <interactant intactId="EBI-942623">
        <id>Q9FGX2</id>
        <label>BZIP1</label>
    </interactant>
    <organismsDiffer>false</organismsDiffer>
    <experiments>5</experiments>
</comment>
<comment type="interaction">
    <interactant intactId="EBI-942804">
        <id>C0Z2L5</id>
    </interactant>
    <interactant intactId="EBI-942648">
        <id>O22763</id>
        <label>BZIP10</label>
    </interactant>
    <organismsDiffer>false</organismsDiffer>
    <experiments>3</experiments>
</comment>
<comment type="interaction">
    <interactant intactId="EBI-942804">
        <id>C0Z2L5</id>
    </interactant>
    <interactant intactId="EBI-942696">
        <id>Q9M1G6</id>
        <label>BZIP25</label>
    </interactant>
    <organismsDiffer>false</organismsDiffer>
    <experiments>6</experiments>
</comment>
<comment type="interaction">
    <interactant intactId="EBI-942804">
        <id>C0Z2L5</id>
    </interactant>
    <interactant intactId="EBI-942845">
        <id>Q9LZP8</id>
        <label>BZIP53</label>
    </interactant>
    <organismsDiffer>false</organismsDiffer>
    <experiments>3</experiments>
</comment>
<comment type="interaction">
    <interactant intactId="EBI-942804">
        <id>C0Z2L5</id>
    </interactant>
    <interactant intactId="EBI-3133475">
        <id>O81002</id>
        <label>BZIP6</label>
    </interactant>
    <organismsDiffer>false</organismsDiffer>
    <experiments>3</experiments>
</comment>
<comment type="interaction">
    <interactant intactId="EBI-942804">
        <id>C0Z2L5</id>
    </interactant>
    <interactant intactId="EBI-942713">
        <id>B9DGI8</id>
        <label>BZIP63</label>
    </interactant>
    <organismsDiffer>false</organismsDiffer>
    <experiments>4</experiments>
</comment>
<comment type="interaction">
    <interactant intactId="EBI-942804">
        <id>C0Z2L5</id>
    </interactant>
    <interactant intactId="EBI-15191817">
        <id>B9DGI8-2</id>
        <label>BZIP63</label>
    </interactant>
    <organismsDiffer>false</organismsDiffer>
    <experiments>3</experiments>
</comment>
<comment type="interaction">
    <interactant intactId="EBI-942804">
        <id>C0Z2L5</id>
    </interactant>
    <interactant intactId="EBI-942633">
        <id>Q9FUD3</id>
        <label>BZIP9</label>
    </interactant>
    <organismsDiffer>false</organismsDiffer>
    <experiments>3</experiments>
</comment>
<comment type="subcellular location">
    <subcellularLocation>
        <location evidence="1">Nucleus</location>
    </subcellularLocation>
</comment>
<comment type="alternative products">
    <event type="alternative splicing"/>
    <isoform>
        <id>C0Z2L5-1</id>
        <name>1</name>
        <sequence type="displayed"/>
    </isoform>
    <text evidence="6">A number of isoforms are produced. According to EST sequences.</text>
</comment>
<comment type="tissue specificity">
    <text evidence="4">Expressed in the micropylar endosperm and radicle tip in early germinating seeds.</text>
</comment>
<comment type="disruption phenotype">
    <text evidence="4">No visible phenotype under normal growth conditions, but seeds have decreased germination speed after imbibition, without affecting overall germination rate.</text>
</comment>
<name>BZP44_ARATH</name>
<keyword id="KW-0025">Alternative splicing</keyword>
<keyword id="KW-0238">DNA-binding</keyword>
<keyword id="KW-0539">Nucleus</keyword>
<keyword id="KW-1185">Reference proteome</keyword>
<keyword id="KW-0804">Transcription</keyword>
<keyword id="KW-0805">Transcription regulation</keyword>
<proteinExistence type="evidence at protein level"/>
<feature type="chain" id="PRO_0000436841" description="bZIP transcription factor 44">
    <location>
        <begin position="1"/>
        <end position="173"/>
    </location>
</feature>
<feature type="domain" description="bZIP" evidence="1">
    <location>
        <begin position="39"/>
        <end position="102"/>
    </location>
</feature>
<feature type="region of interest" description="Disordered" evidence="2">
    <location>
        <begin position="1"/>
        <end position="65"/>
    </location>
</feature>
<feature type="region of interest" description="Basic motif" evidence="1">
    <location>
        <begin position="41"/>
        <end position="62"/>
    </location>
</feature>
<feature type="region of interest" description="Leucine-zipper" evidence="1">
    <location>
        <begin position="67"/>
        <end position="81"/>
    </location>
</feature>
<feature type="compositionally biased region" description="Low complexity" evidence="2">
    <location>
        <begin position="8"/>
        <end position="22"/>
    </location>
</feature>
<feature type="compositionally biased region" description="Basic and acidic residues" evidence="2">
    <location>
        <begin position="30"/>
        <end position="41"/>
    </location>
</feature>
<organism>
    <name type="scientific">Arabidopsis thaliana</name>
    <name type="common">Mouse-ear cress</name>
    <dbReference type="NCBI Taxonomy" id="3702"/>
    <lineage>
        <taxon>Eukaryota</taxon>
        <taxon>Viridiplantae</taxon>
        <taxon>Streptophyta</taxon>
        <taxon>Embryophyta</taxon>
        <taxon>Tracheophyta</taxon>
        <taxon>Spermatophyta</taxon>
        <taxon>Magnoliopsida</taxon>
        <taxon>eudicotyledons</taxon>
        <taxon>Gunneridae</taxon>
        <taxon>Pentapetalae</taxon>
        <taxon>rosids</taxon>
        <taxon>malvids</taxon>
        <taxon>Brassicales</taxon>
        <taxon>Brassicaceae</taxon>
        <taxon>Camelineae</taxon>
        <taxon>Arabidopsis</taxon>
    </lineage>
</organism>
<evidence type="ECO:0000255" key="1">
    <source>
        <dbReference type="PROSITE-ProRule" id="PRU00978"/>
    </source>
</evidence>
<evidence type="ECO:0000256" key="2">
    <source>
        <dbReference type="SAM" id="MobiDB-lite"/>
    </source>
</evidence>
<evidence type="ECO:0000269" key="3">
    <source>
    </source>
</evidence>
<evidence type="ECO:0000269" key="4">
    <source>
    </source>
</evidence>
<evidence type="ECO:0000303" key="5">
    <source>
    </source>
</evidence>
<evidence type="ECO:0000305" key="6"/>
<evidence type="ECO:0000312" key="7">
    <source>
        <dbReference type="Araport" id="AT1G75390"/>
    </source>
</evidence>
<evidence type="ECO:0000312" key="8">
    <source>
        <dbReference type="EMBL" id="AAG13064.1"/>
    </source>
</evidence>
<sequence>MNNKTEMGSSTSGNCSSVSTTGLANSGSESDLRQRDLIDERKRKRKQSNRESARRSRMRKQKHLDDLTAQVTHLRKENAQIVAGIAVTTQHYVTIEAENDILRAQVLELNHRLQSLNEIVDFVESSSSGFGMETGQGLFDGGLFDGVMNPMNLGFYNQPIMASASTAGDVFNC</sequence>
<gene>
    <name evidence="5" type="primary">BZIP44</name>
    <name evidence="7" type="ordered locus">At1g75390</name>
    <name evidence="8" type="ORF">F1B16.8</name>
</gene>
<dbReference type="EMBL" id="AC023754">
    <property type="protein sequence ID" value="AAG13064.1"/>
    <property type="molecule type" value="Genomic_DNA"/>
</dbReference>
<dbReference type="EMBL" id="CP002684">
    <property type="protein sequence ID" value="AEE35713.1"/>
    <property type="molecule type" value="Genomic_DNA"/>
</dbReference>
<dbReference type="EMBL" id="AK318829">
    <property type="protein sequence ID" value="BAH56944.1"/>
    <property type="molecule type" value="mRNA"/>
</dbReference>
<dbReference type="EMBL" id="AK318991">
    <property type="protein sequence ID" value="BAH57106.1"/>
    <property type="molecule type" value="mRNA"/>
</dbReference>
<dbReference type="EMBL" id="AB493534">
    <property type="protein sequence ID" value="BAH30372.1"/>
    <property type="molecule type" value="Genomic_DNA"/>
</dbReference>
<dbReference type="EMBL" id="BT004768">
    <property type="protein sequence ID" value="AAO44034.1"/>
    <property type="molecule type" value="mRNA"/>
</dbReference>
<dbReference type="PIR" id="D96784">
    <property type="entry name" value="D96784"/>
</dbReference>
<dbReference type="RefSeq" id="NP_177672.2">
    <molecule id="C0Z2L5-1"/>
    <property type="nucleotide sequence ID" value="NM_106193.4"/>
</dbReference>
<dbReference type="SMR" id="C0Z2L5"/>
<dbReference type="FunCoup" id="C0Z2L5">
    <property type="interactions" value="93"/>
</dbReference>
<dbReference type="IntAct" id="C0Z2L5">
    <property type="interactions" value="12"/>
</dbReference>
<dbReference type="MINT" id="C0Z2L5"/>
<dbReference type="STRING" id="3702.C0Z2L5"/>
<dbReference type="PaxDb" id="3702-AT1G75390.1"/>
<dbReference type="EnsemblPlants" id="AT1G75390.1">
    <molecule id="C0Z2L5-1"/>
    <property type="protein sequence ID" value="AT1G75390.1"/>
    <property type="gene ID" value="AT1G75390"/>
</dbReference>
<dbReference type="GeneID" id="843875"/>
<dbReference type="Gramene" id="AT1G75390.1">
    <molecule id="C0Z2L5-1"/>
    <property type="protein sequence ID" value="AT1G75390.1"/>
    <property type="gene ID" value="AT1G75390"/>
</dbReference>
<dbReference type="KEGG" id="ath:AT1G75390"/>
<dbReference type="Araport" id="AT1G75390"/>
<dbReference type="TAIR" id="AT1G75390">
    <property type="gene designation" value="BZIP44"/>
</dbReference>
<dbReference type="eggNOG" id="ENOG502S0BS">
    <property type="taxonomic scope" value="Eukaryota"/>
</dbReference>
<dbReference type="HOGENOM" id="CLU_112634_1_0_1"/>
<dbReference type="InParanoid" id="C0Z2L5"/>
<dbReference type="OMA" id="FTTQHYL"/>
<dbReference type="PhylomeDB" id="C0Z2L5"/>
<dbReference type="PRO" id="PR:C0Z2L5"/>
<dbReference type="Proteomes" id="UP000006548">
    <property type="component" value="Chromosome 1"/>
</dbReference>
<dbReference type="ExpressionAtlas" id="C0Z2L5">
    <property type="expression patterns" value="baseline and differential"/>
</dbReference>
<dbReference type="GO" id="GO:0005634">
    <property type="term" value="C:nucleus"/>
    <property type="evidence" value="ECO:0007669"/>
    <property type="project" value="UniProtKB-SubCell"/>
</dbReference>
<dbReference type="GO" id="GO:0003700">
    <property type="term" value="F:DNA-binding transcription factor activity"/>
    <property type="evidence" value="ECO:0000315"/>
    <property type="project" value="TAIR"/>
</dbReference>
<dbReference type="GO" id="GO:0046982">
    <property type="term" value="F:protein heterodimerization activity"/>
    <property type="evidence" value="ECO:0000353"/>
    <property type="project" value="UniProtKB"/>
</dbReference>
<dbReference type="GO" id="GO:0043565">
    <property type="term" value="F:sequence-specific DNA binding"/>
    <property type="evidence" value="ECO:0000314"/>
    <property type="project" value="TAIR"/>
</dbReference>
<dbReference type="GO" id="GO:0000976">
    <property type="term" value="F:transcription cis-regulatory region binding"/>
    <property type="evidence" value="ECO:0000353"/>
    <property type="project" value="TAIR"/>
</dbReference>
<dbReference type="GO" id="GO:0009845">
    <property type="term" value="P:seed germination"/>
    <property type="evidence" value="ECO:0000315"/>
    <property type="project" value="TAIR"/>
</dbReference>
<dbReference type="CDD" id="cd14702">
    <property type="entry name" value="bZIP_plant_GBF1"/>
    <property type="match status" value="1"/>
</dbReference>
<dbReference type="FunFam" id="1.20.5.170:FF:000020">
    <property type="entry name" value="BZIP transcription factor"/>
    <property type="match status" value="1"/>
</dbReference>
<dbReference type="Gene3D" id="1.20.5.170">
    <property type="match status" value="1"/>
</dbReference>
<dbReference type="InterPro" id="IPR004827">
    <property type="entry name" value="bZIP"/>
</dbReference>
<dbReference type="InterPro" id="IPR045314">
    <property type="entry name" value="bZIP_plant_GBF1"/>
</dbReference>
<dbReference type="InterPro" id="IPR046347">
    <property type="entry name" value="bZIP_sf"/>
</dbReference>
<dbReference type="PANTHER" id="PTHR45764">
    <property type="entry name" value="BZIP TRANSCRIPTION FACTOR 44"/>
    <property type="match status" value="1"/>
</dbReference>
<dbReference type="PANTHER" id="PTHR45764:SF38">
    <property type="entry name" value="BZIP TRANSCRIPTION FACTOR 44"/>
    <property type="match status" value="1"/>
</dbReference>
<dbReference type="Pfam" id="PF00170">
    <property type="entry name" value="bZIP_1"/>
    <property type="match status" value="1"/>
</dbReference>
<dbReference type="SMART" id="SM00338">
    <property type="entry name" value="BRLZ"/>
    <property type="match status" value="1"/>
</dbReference>
<dbReference type="SUPFAM" id="SSF57959">
    <property type="entry name" value="Leucine zipper domain"/>
    <property type="match status" value="1"/>
</dbReference>
<dbReference type="PROSITE" id="PS50217">
    <property type="entry name" value="BZIP"/>
    <property type="match status" value="1"/>
</dbReference>
<dbReference type="PROSITE" id="PS00036">
    <property type="entry name" value="BZIP_BASIC"/>
    <property type="match status" value="1"/>
</dbReference>
<accession>C0Z2L5</accession>
<accession>Q9FWS7</accession>
<reference key="1">
    <citation type="journal article" date="2000" name="Nature">
        <title>Sequence and analysis of chromosome 1 of the plant Arabidopsis thaliana.</title>
        <authorList>
            <person name="Theologis A."/>
            <person name="Ecker J.R."/>
            <person name="Palm C.J."/>
            <person name="Federspiel N.A."/>
            <person name="Kaul S."/>
            <person name="White O."/>
            <person name="Alonso J."/>
            <person name="Altafi H."/>
            <person name="Araujo R."/>
            <person name="Bowman C.L."/>
            <person name="Brooks S.Y."/>
            <person name="Buehler E."/>
            <person name="Chan A."/>
            <person name="Chao Q."/>
            <person name="Chen H."/>
            <person name="Cheuk R.F."/>
            <person name="Chin C.W."/>
            <person name="Chung M.K."/>
            <person name="Conn L."/>
            <person name="Conway A.B."/>
            <person name="Conway A.R."/>
            <person name="Creasy T.H."/>
            <person name="Dewar K."/>
            <person name="Dunn P."/>
            <person name="Etgu P."/>
            <person name="Feldblyum T.V."/>
            <person name="Feng J.-D."/>
            <person name="Fong B."/>
            <person name="Fujii C.Y."/>
            <person name="Gill J.E."/>
            <person name="Goldsmith A.D."/>
            <person name="Haas B."/>
            <person name="Hansen N.F."/>
            <person name="Hughes B."/>
            <person name="Huizar L."/>
            <person name="Hunter J.L."/>
            <person name="Jenkins J."/>
            <person name="Johnson-Hopson C."/>
            <person name="Khan S."/>
            <person name="Khaykin E."/>
            <person name="Kim C.J."/>
            <person name="Koo H.L."/>
            <person name="Kremenetskaia I."/>
            <person name="Kurtz D.B."/>
            <person name="Kwan A."/>
            <person name="Lam B."/>
            <person name="Langin-Hooper S."/>
            <person name="Lee A."/>
            <person name="Lee J.M."/>
            <person name="Lenz C.A."/>
            <person name="Li J.H."/>
            <person name="Li Y.-P."/>
            <person name="Lin X."/>
            <person name="Liu S.X."/>
            <person name="Liu Z.A."/>
            <person name="Luros J.S."/>
            <person name="Maiti R."/>
            <person name="Marziali A."/>
            <person name="Militscher J."/>
            <person name="Miranda M."/>
            <person name="Nguyen M."/>
            <person name="Nierman W.C."/>
            <person name="Osborne B.I."/>
            <person name="Pai G."/>
            <person name="Peterson J."/>
            <person name="Pham P.K."/>
            <person name="Rizzo M."/>
            <person name="Rooney T."/>
            <person name="Rowley D."/>
            <person name="Sakano H."/>
            <person name="Salzberg S.L."/>
            <person name="Schwartz J.R."/>
            <person name="Shinn P."/>
            <person name="Southwick A.M."/>
            <person name="Sun H."/>
            <person name="Tallon L.J."/>
            <person name="Tambunga G."/>
            <person name="Toriumi M.J."/>
            <person name="Town C.D."/>
            <person name="Utterback T."/>
            <person name="Van Aken S."/>
            <person name="Vaysberg M."/>
            <person name="Vysotskaia V.S."/>
            <person name="Walker M."/>
            <person name="Wu D."/>
            <person name="Yu G."/>
            <person name="Fraser C.M."/>
            <person name="Venter J.C."/>
            <person name="Davis R.W."/>
        </authorList>
    </citation>
    <scope>NUCLEOTIDE SEQUENCE [LARGE SCALE GENOMIC DNA]</scope>
    <source>
        <strain>cv. Columbia</strain>
    </source>
</reference>
<reference key="2">
    <citation type="journal article" date="2017" name="Plant J.">
        <title>Araport11: a complete reannotation of the Arabidopsis thaliana reference genome.</title>
        <authorList>
            <person name="Cheng C.Y."/>
            <person name="Krishnakumar V."/>
            <person name="Chan A.P."/>
            <person name="Thibaud-Nissen F."/>
            <person name="Schobel S."/>
            <person name="Town C.D."/>
        </authorList>
    </citation>
    <scope>GENOME REANNOTATION</scope>
    <source>
        <strain>cv. Columbia</strain>
    </source>
</reference>
<reference key="3">
    <citation type="journal article" date="2009" name="DNA Res.">
        <title>Analysis of multiple occurrences of alternative splicing events in Arabidopsis thaliana using novel sequenced full-length cDNAs.</title>
        <authorList>
            <person name="Iida K."/>
            <person name="Fukami-Kobayashi K."/>
            <person name="Toyoda A."/>
            <person name="Sakaki Y."/>
            <person name="Kobayashi M."/>
            <person name="Seki M."/>
            <person name="Shinozaki K."/>
        </authorList>
    </citation>
    <scope>NUCLEOTIDE SEQUENCE [LARGE SCALE MRNA]</scope>
    <source>
        <strain>cv. Columbia</strain>
    </source>
</reference>
<reference key="4">
    <citation type="submission" date="2009-03" db="EMBL/GenBank/DDBJ databases">
        <title>ORF cloning and analysis of Arabidopsis transcription factor genes.</title>
        <authorList>
            <person name="Fujita M."/>
            <person name="Mizukado S."/>
            <person name="Seki M."/>
            <person name="Shinozaki K."/>
            <person name="Mitsuda N."/>
            <person name="Takiguchi Y."/>
            <person name="Takagi M."/>
        </authorList>
    </citation>
    <scope>NUCLEOTIDE SEQUENCE [LARGE SCALE GENOMIC DNA]</scope>
</reference>
<reference key="5">
    <citation type="journal article" date="2003" name="Science">
        <title>Empirical analysis of transcriptional activity in the Arabidopsis genome.</title>
        <authorList>
            <person name="Yamada K."/>
            <person name="Lim J."/>
            <person name="Dale J.M."/>
            <person name="Chen H."/>
            <person name="Shinn P."/>
            <person name="Palm C.J."/>
            <person name="Southwick A.M."/>
            <person name="Wu H.C."/>
            <person name="Kim C.J."/>
            <person name="Nguyen M."/>
            <person name="Pham P.K."/>
            <person name="Cheuk R.F."/>
            <person name="Karlin-Newmann G."/>
            <person name="Liu S.X."/>
            <person name="Lam B."/>
            <person name="Sakano H."/>
            <person name="Wu T."/>
            <person name="Yu G."/>
            <person name="Miranda M."/>
            <person name="Quach H.L."/>
            <person name="Tripp M."/>
            <person name="Chang C.H."/>
            <person name="Lee J.M."/>
            <person name="Toriumi M.J."/>
            <person name="Chan M.M."/>
            <person name="Tang C.C."/>
            <person name="Onodera C.S."/>
            <person name="Deng J.M."/>
            <person name="Akiyama K."/>
            <person name="Ansari Y."/>
            <person name="Arakawa T."/>
            <person name="Banh J."/>
            <person name="Banno F."/>
            <person name="Bowser L."/>
            <person name="Brooks S.Y."/>
            <person name="Carninci P."/>
            <person name="Chao Q."/>
            <person name="Choy N."/>
            <person name="Enju A."/>
            <person name="Goldsmith A.D."/>
            <person name="Gurjal M."/>
            <person name="Hansen N.F."/>
            <person name="Hayashizaki Y."/>
            <person name="Johnson-Hopson C."/>
            <person name="Hsuan V.W."/>
            <person name="Iida K."/>
            <person name="Karnes M."/>
            <person name="Khan S."/>
            <person name="Koesema E."/>
            <person name="Ishida J."/>
            <person name="Jiang P.X."/>
            <person name="Jones T."/>
            <person name="Kawai J."/>
            <person name="Kamiya A."/>
            <person name="Meyers C."/>
            <person name="Nakajima M."/>
            <person name="Narusaka M."/>
            <person name="Seki M."/>
            <person name="Sakurai T."/>
            <person name="Satou M."/>
            <person name="Tamse R."/>
            <person name="Vaysberg M."/>
            <person name="Wallender E.K."/>
            <person name="Wong C."/>
            <person name="Yamamura Y."/>
            <person name="Yuan S."/>
            <person name="Shinozaki K."/>
            <person name="Davis R.W."/>
            <person name="Theologis A."/>
            <person name="Ecker J.R."/>
        </authorList>
    </citation>
    <scope>NUCLEOTIDE SEQUENCE [LARGE SCALE MRNA] OF 7-173</scope>
    <source>
        <strain>cv. Columbia</strain>
    </source>
</reference>
<reference key="6">
    <citation type="journal article" date="2002" name="Trends Plant Sci.">
        <title>bZIP transcription factors in Arabidopsis.</title>
        <authorList>
            <person name="Jakoby M."/>
            <person name="Weisshaar B."/>
            <person name="Droege-Laser W."/>
            <person name="Vicente-Carbajosa J."/>
            <person name="Tiedemann J."/>
            <person name="Kroj T."/>
            <person name="Parcy F."/>
        </authorList>
    </citation>
    <scope>GENE FAMILY</scope>
    <scope>NOMENCLATURE</scope>
</reference>
<reference key="7">
    <citation type="journal article" date="2006" name="Plant J.">
        <title>Two-hybrid protein-protein interaction analysis in Arabidopsis protoplasts: establishment of a heterodimerization map of group C and group S bZIP transcription factors.</title>
        <authorList>
            <person name="Ehlert A."/>
            <person name="Weltmeier F."/>
            <person name="Wang X."/>
            <person name="Mayer C.S."/>
            <person name="Smeekens S."/>
            <person name="Vicente-Carbajosa J."/>
            <person name="Droege-Laser W."/>
        </authorList>
    </citation>
    <scope>INTERACTION WITH BZIP1; BZIP9; BZIP10; BZIP25 AND BZIP63</scope>
</reference>
<reference key="8">
    <citation type="journal article" date="2013" name="Plant J.">
        <title>Arabidopsis thaliana bZIP44: a transcription factor affecting seed germination and expression of the mannanase-encoding gene AtMAN7.</title>
        <authorList>
            <person name="Iglesias-Fernandez R."/>
            <person name="Barrero-Sicilia C."/>
            <person name="Carrillo-Barral N."/>
            <person name="Onate-Sanchez L."/>
            <person name="Carbonero P."/>
        </authorList>
    </citation>
    <scope>FUNCTION</scope>
    <scope>TISSUE SPECIFICITY</scope>
    <scope>DISRUPTION PHENOTYPE</scope>
</reference>